<evidence type="ECO:0000255" key="1">
    <source>
        <dbReference type="HAMAP-Rule" id="MF_00530"/>
    </source>
</evidence>
<proteinExistence type="inferred from homology"/>
<keyword id="KW-0066">ATP synthesis</keyword>
<keyword id="KW-0997">Cell inner membrane</keyword>
<keyword id="KW-1003">Cell membrane</keyword>
<keyword id="KW-0139">CF(1)</keyword>
<keyword id="KW-0375">Hydrogen ion transport</keyword>
<keyword id="KW-0406">Ion transport</keyword>
<keyword id="KW-0472">Membrane</keyword>
<keyword id="KW-1185">Reference proteome</keyword>
<keyword id="KW-0813">Transport</keyword>
<name>ATPE_ALKEH</name>
<reference key="1">
    <citation type="submission" date="2006-08" db="EMBL/GenBank/DDBJ databases">
        <title>Complete sequence of Alkalilimnicola ehrilichei MLHE-1.</title>
        <authorList>
            <person name="Copeland A."/>
            <person name="Lucas S."/>
            <person name="Lapidus A."/>
            <person name="Barry K."/>
            <person name="Detter J.C."/>
            <person name="Glavina del Rio T."/>
            <person name="Hammon N."/>
            <person name="Israni S."/>
            <person name="Dalin E."/>
            <person name="Tice H."/>
            <person name="Pitluck S."/>
            <person name="Sims D."/>
            <person name="Brettin T."/>
            <person name="Bruce D."/>
            <person name="Han C."/>
            <person name="Tapia R."/>
            <person name="Gilna P."/>
            <person name="Schmutz J."/>
            <person name="Larimer F."/>
            <person name="Land M."/>
            <person name="Hauser L."/>
            <person name="Kyrpides N."/>
            <person name="Mikhailova N."/>
            <person name="Oremland R.S."/>
            <person name="Hoeft S.E."/>
            <person name="Switzer-Blum J."/>
            <person name="Kulp T."/>
            <person name="King G."/>
            <person name="Tabita R."/>
            <person name="Witte B."/>
            <person name="Santini J.M."/>
            <person name="Basu P."/>
            <person name="Hollibaugh J.T."/>
            <person name="Xie G."/>
            <person name="Stolz J.F."/>
            <person name="Richardson P."/>
        </authorList>
    </citation>
    <scope>NUCLEOTIDE SEQUENCE [LARGE SCALE GENOMIC DNA]</scope>
    <source>
        <strain>ATCC BAA-1101 / DSM 17681 / MLHE-1</strain>
    </source>
</reference>
<sequence length="140" mass="15473">MSTLHVDIVSAEQAIHSGEAKMLVAPAREGDIGITPRHAPLLTKLRPGEVRVQDENGEERFFYVSGGIIEVQPHKVTVLADTAARARDLDEAAAQEAKRRAEEALANRKAGEDYSHVQAELAEAMAQLQTLERLRRRAKR</sequence>
<organism>
    <name type="scientific">Alkalilimnicola ehrlichii (strain ATCC BAA-1101 / DSM 17681 / MLHE-1)</name>
    <dbReference type="NCBI Taxonomy" id="187272"/>
    <lineage>
        <taxon>Bacteria</taxon>
        <taxon>Pseudomonadati</taxon>
        <taxon>Pseudomonadota</taxon>
        <taxon>Gammaproteobacteria</taxon>
        <taxon>Chromatiales</taxon>
        <taxon>Ectothiorhodospiraceae</taxon>
        <taxon>Alkalilimnicola</taxon>
    </lineage>
</organism>
<dbReference type="EMBL" id="CP000453">
    <property type="protein sequence ID" value="ABI58208.1"/>
    <property type="molecule type" value="Genomic_DNA"/>
</dbReference>
<dbReference type="RefSeq" id="WP_011630601.1">
    <property type="nucleotide sequence ID" value="NC_008340.1"/>
</dbReference>
<dbReference type="SMR" id="Q0A4M9"/>
<dbReference type="KEGG" id="aeh:Mlg_2868"/>
<dbReference type="eggNOG" id="COG0355">
    <property type="taxonomic scope" value="Bacteria"/>
</dbReference>
<dbReference type="HOGENOM" id="CLU_084338_2_0_6"/>
<dbReference type="OrthoDB" id="9791445at2"/>
<dbReference type="Proteomes" id="UP000001962">
    <property type="component" value="Chromosome"/>
</dbReference>
<dbReference type="GO" id="GO:0005886">
    <property type="term" value="C:plasma membrane"/>
    <property type="evidence" value="ECO:0007669"/>
    <property type="project" value="UniProtKB-SubCell"/>
</dbReference>
<dbReference type="GO" id="GO:0045259">
    <property type="term" value="C:proton-transporting ATP synthase complex"/>
    <property type="evidence" value="ECO:0007669"/>
    <property type="project" value="UniProtKB-KW"/>
</dbReference>
<dbReference type="GO" id="GO:0005524">
    <property type="term" value="F:ATP binding"/>
    <property type="evidence" value="ECO:0007669"/>
    <property type="project" value="UniProtKB-UniRule"/>
</dbReference>
<dbReference type="GO" id="GO:0046933">
    <property type="term" value="F:proton-transporting ATP synthase activity, rotational mechanism"/>
    <property type="evidence" value="ECO:0007669"/>
    <property type="project" value="UniProtKB-UniRule"/>
</dbReference>
<dbReference type="CDD" id="cd12152">
    <property type="entry name" value="F1-ATPase_delta"/>
    <property type="match status" value="1"/>
</dbReference>
<dbReference type="FunFam" id="2.60.15.10:FF:000001">
    <property type="entry name" value="ATP synthase epsilon chain"/>
    <property type="match status" value="1"/>
</dbReference>
<dbReference type="Gene3D" id="1.20.5.440">
    <property type="entry name" value="ATP synthase delta/epsilon subunit, C-terminal domain"/>
    <property type="match status" value="1"/>
</dbReference>
<dbReference type="Gene3D" id="2.60.15.10">
    <property type="entry name" value="F0F1 ATP synthase delta/epsilon subunit, N-terminal"/>
    <property type="match status" value="1"/>
</dbReference>
<dbReference type="HAMAP" id="MF_00530">
    <property type="entry name" value="ATP_synth_epsil_bac"/>
    <property type="match status" value="1"/>
</dbReference>
<dbReference type="InterPro" id="IPR036794">
    <property type="entry name" value="ATP_F1_dsu/esu_C_sf"/>
</dbReference>
<dbReference type="InterPro" id="IPR001469">
    <property type="entry name" value="ATP_synth_F1_dsu/esu"/>
</dbReference>
<dbReference type="InterPro" id="IPR020546">
    <property type="entry name" value="ATP_synth_F1_dsu/esu_N"/>
</dbReference>
<dbReference type="InterPro" id="IPR020547">
    <property type="entry name" value="ATP_synth_F1_esu_C"/>
</dbReference>
<dbReference type="InterPro" id="IPR036771">
    <property type="entry name" value="ATPsynth_dsu/esu_N"/>
</dbReference>
<dbReference type="NCBIfam" id="TIGR01216">
    <property type="entry name" value="ATP_synt_epsi"/>
    <property type="match status" value="1"/>
</dbReference>
<dbReference type="NCBIfam" id="NF001847">
    <property type="entry name" value="PRK00571.1-4"/>
    <property type="match status" value="1"/>
</dbReference>
<dbReference type="NCBIfam" id="NF009977">
    <property type="entry name" value="PRK13442.1"/>
    <property type="match status" value="1"/>
</dbReference>
<dbReference type="PANTHER" id="PTHR13822">
    <property type="entry name" value="ATP SYNTHASE DELTA/EPSILON CHAIN"/>
    <property type="match status" value="1"/>
</dbReference>
<dbReference type="PANTHER" id="PTHR13822:SF10">
    <property type="entry name" value="ATP SYNTHASE EPSILON CHAIN, CHLOROPLASTIC"/>
    <property type="match status" value="1"/>
</dbReference>
<dbReference type="Pfam" id="PF00401">
    <property type="entry name" value="ATP-synt_DE"/>
    <property type="match status" value="1"/>
</dbReference>
<dbReference type="Pfam" id="PF02823">
    <property type="entry name" value="ATP-synt_DE_N"/>
    <property type="match status" value="1"/>
</dbReference>
<dbReference type="SUPFAM" id="SSF46604">
    <property type="entry name" value="Epsilon subunit of F1F0-ATP synthase C-terminal domain"/>
    <property type="match status" value="1"/>
</dbReference>
<dbReference type="SUPFAM" id="SSF51344">
    <property type="entry name" value="Epsilon subunit of F1F0-ATP synthase N-terminal domain"/>
    <property type="match status" value="1"/>
</dbReference>
<gene>
    <name evidence="1" type="primary">atpC</name>
    <name type="ordered locus">Mlg_2868</name>
</gene>
<accession>Q0A4M9</accession>
<comment type="function">
    <text evidence="1">Produces ATP from ADP in the presence of a proton gradient across the membrane.</text>
</comment>
<comment type="subunit">
    <text>F-type ATPases have 2 components, CF(1) - the catalytic core - and CF(0) - the membrane proton channel. CF(1) has five subunits: alpha(3), beta(3), gamma(1), delta(1), epsilon(1). CF(0) has three main subunits: a, b and c.</text>
</comment>
<comment type="subcellular location">
    <subcellularLocation>
        <location evidence="1">Cell inner membrane</location>
        <topology evidence="1">Peripheral membrane protein</topology>
    </subcellularLocation>
</comment>
<comment type="similarity">
    <text evidence="1">Belongs to the ATPase epsilon chain family.</text>
</comment>
<protein>
    <recommendedName>
        <fullName evidence="1">ATP synthase epsilon chain</fullName>
    </recommendedName>
    <alternativeName>
        <fullName evidence="1">ATP synthase F1 sector epsilon subunit</fullName>
    </alternativeName>
    <alternativeName>
        <fullName evidence="1">F-ATPase epsilon subunit</fullName>
    </alternativeName>
</protein>
<feature type="chain" id="PRO_0000265781" description="ATP synthase epsilon chain">
    <location>
        <begin position="1"/>
        <end position="140"/>
    </location>
</feature>